<name>ARGB_ANADF</name>
<proteinExistence type="inferred from homology"/>
<sequence length="271" mass="28152">MKTIVLKLGGELVHAPELDVIARDLRVLVDGFNRVAIVHGGGPQASALQKTLGLETRMVAGRRYTDAQTLEVMKYVVAGQLNVDLCGRLLANGVMGVGLHGASGHVVQARRRPPRVMKGAGPEPVDLGLVGDVLGFNLPLLGDLFERRYVPVIACLGCDAQGQALNINGDTVASQLAGALEADALVLVTSTPGVLRDVNDPSSRIPHITHAEFERMVADGTISGGMIPKLEESFAVLDSGAKSVVIVGKLGEGDLAHAVLNPGSAGTVLVG</sequence>
<feature type="chain" id="PRO_1000075300" description="Acetylglutamate kinase">
    <location>
        <begin position="1"/>
        <end position="271"/>
    </location>
</feature>
<feature type="binding site" evidence="1">
    <location>
        <begin position="41"/>
        <end position="42"/>
    </location>
    <ligand>
        <name>substrate</name>
    </ligand>
</feature>
<feature type="binding site" evidence="1">
    <location>
        <position position="63"/>
    </location>
    <ligand>
        <name>substrate</name>
    </ligand>
</feature>
<feature type="binding site" evidence="1">
    <location>
        <position position="166"/>
    </location>
    <ligand>
        <name>substrate</name>
    </ligand>
</feature>
<feature type="site" description="Transition state stabilizer" evidence="1">
    <location>
        <position position="7"/>
    </location>
</feature>
<feature type="site" description="Transition state stabilizer" evidence="1">
    <location>
        <position position="229"/>
    </location>
</feature>
<accession>A7H6Q3</accession>
<protein>
    <recommendedName>
        <fullName evidence="1">Acetylglutamate kinase</fullName>
        <ecNumber evidence="1">2.7.2.8</ecNumber>
    </recommendedName>
    <alternativeName>
        <fullName evidence="1">N-acetyl-L-glutamate 5-phosphotransferase</fullName>
    </alternativeName>
    <alternativeName>
        <fullName evidence="1">NAG kinase</fullName>
        <shortName evidence="1">NAGK</shortName>
    </alternativeName>
</protein>
<gene>
    <name evidence="1" type="primary">argB</name>
    <name type="ordered locus">Anae109_0181</name>
</gene>
<organism>
    <name type="scientific">Anaeromyxobacter sp. (strain Fw109-5)</name>
    <dbReference type="NCBI Taxonomy" id="404589"/>
    <lineage>
        <taxon>Bacteria</taxon>
        <taxon>Pseudomonadati</taxon>
        <taxon>Myxococcota</taxon>
        <taxon>Myxococcia</taxon>
        <taxon>Myxococcales</taxon>
        <taxon>Cystobacterineae</taxon>
        <taxon>Anaeromyxobacteraceae</taxon>
        <taxon>Anaeromyxobacter</taxon>
    </lineage>
</organism>
<evidence type="ECO:0000255" key="1">
    <source>
        <dbReference type="HAMAP-Rule" id="MF_00082"/>
    </source>
</evidence>
<keyword id="KW-0028">Amino-acid biosynthesis</keyword>
<keyword id="KW-0055">Arginine biosynthesis</keyword>
<keyword id="KW-0067">ATP-binding</keyword>
<keyword id="KW-0963">Cytoplasm</keyword>
<keyword id="KW-0418">Kinase</keyword>
<keyword id="KW-0547">Nucleotide-binding</keyword>
<keyword id="KW-1185">Reference proteome</keyword>
<keyword id="KW-0808">Transferase</keyword>
<comment type="function">
    <text evidence="1">Catalyzes the ATP-dependent phosphorylation of N-acetyl-L-glutamate.</text>
</comment>
<comment type="catalytic activity">
    <reaction evidence="1">
        <text>N-acetyl-L-glutamate + ATP = N-acetyl-L-glutamyl 5-phosphate + ADP</text>
        <dbReference type="Rhea" id="RHEA:14629"/>
        <dbReference type="ChEBI" id="CHEBI:30616"/>
        <dbReference type="ChEBI" id="CHEBI:44337"/>
        <dbReference type="ChEBI" id="CHEBI:57936"/>
        <dbReference type="ChEBI" id="CHEBI:456216"/>
        <dbReference type="EC" id="2.7.2.8"/>
    </reaction>
</comment>
<comment type="pathway">
    <text evidence="1">Amino-acid biosynthesis; L-arginine biosynthesis; N(2)-acetyl-L-ornithine from L-glutamate: step 2/4.</text>
</comment>
<comment type="subcellular location">
    <subcellularLocation>
        <location evidence="1">Cytoplasm</location>
    </subcellularLocation>
</comment>
<comment type="similarity">
    <text evidence="1">Belongs to the acetylglutamate kinase family. ArgB subfamily.</text>
</comment>
<dbReference type="EC" id="2.7.2.8" evidence="1"/>
<dbReference type="EMBL" id="CP000769">
    <property type="protein sequence ID" value="ABS24399.1"/>
    <property type="molecule type" value="Genomic_DNA"/>
</dbReference>
<dbReference type="RefSeq" id="WP_011984505.1">
    <property type="nucleotide sequence ID" value="NC_009675.1"/>
</dbReference>
<dbReference type="SMR" id="A7H6Q3"/>
<dbReference type="STRING" id="404589.Anae109_0181"/>
<dbReference type="KEGG" id="afw:Anae109_0181"/>
<dbReference type="eggNOG" id="COG0548">
    <property type="taxonomic scope" value="Bacteria"/>
</dbReference>
<dbReference type="HOGENOM" id="CLU_053680_0_0_7"/>
<dbReference type="OrthoDB" id="9803155at2"/>
<dbReference type="UniPathway" id="UPA00068">
    <property type="reaction ID" value="UER00107"/>
</dbReference>
<dbReference type="Proteomes" id="UP000006382">
    <property type="component" value="Chromosome"/>
</dbReference>
<dbReference type="GO" id="GO:0005737">
    <property type="term" value="C:cytoplasm"/>
    <property type="evidence" value="ECO:0007669"/>
    <property type="project" value="UniProtKB-SubCell"/>
</dbReference>
<dbReference type="GO" id="GO:0003991">
    <property type="term" value="F:acetylglutamate kinase activity"/>
    <property type="evidence" value="ECO:0007669"/>
    <property type="project" value="UniProtKB-UniRule"/>
</dbReference>
<dbReference type="GO" id="GO:0005524">
    <property type="term" value="F:ATP binding"/>
    <property type="evidence" value="ECO:0007669"/>
    <property type="project" value="UniProtKB-UniRule"/>
</dbReference>
<dbReference type="GO" id="GO:0042450">
    <property type="term" value="P:arginine biosynthetic process via ornithine"/>
    <property type="evidence" value="ECO:0007669"/>
    <property type="project" value="UniProtKB-UniRule"/>
</dbReference>
<dbReference type="GO" id="GO:0006526">
    <property type="term" value="P:L-arginine biosynthetic process"/>
    <property type="evidence" value="ECO:0007669"/>
    <property type="project" value="UniProtKB-UniPathway"/>
</dbReference>
<dbReference type="Gene3D" id="3.40.1160.10">
    <property type="entry name" value="Acetylglutamate kinase-like"/>
    <property type="match status" value="1"/>
</dbReference>
<dbReference type="HAMAP" id="MF_00082">
    <property type="entry name" value="ArgB"/>
    <property type="match status" value="1"/>
</dbReference>
<dbReference type="InterPro" id="IPR036393">
    <property type="entry name" value="AceGlu_kinase-like_sf"/>
</dbReference>
<dbReference type="InterPro" id="IPR004662">
    <property type="entry name" value="AcgluKinase_fam"/>
</dbReference>
<dbReference type="InterPro" id="IPR037528">
    <property type="entry name" value="ArgB"/>
</dbReference>
<dbReference type="InterPro" id="IPR001048">
    <property type="entry name" value="Asp/Glu/Uridylate_kinase"/>
</dbReference>
<dbReference type="NCBIfam" id="TIGR00761">
    <property type="entry name" value="argB"/>
    <property type="match status" value="1"/>
</dbReference>
<dbReference type="PANTHER" id="PTHR23342">
    <property type="entry name" value="N-ACETYLGLUTAMATE SYNTHASE"/>
    <property type="match status" value="1"/>
</dbReference>
<dbReference type="PANTHER" id="PTHR23342:SF0">
    <property type="entry name" value="N-ACETYLGLUTAMATE SYNTHASE, MITOCHONDRIAL"/>
    <property type="match status" value="1"/>
</dbReference>
<dbReference type="Pfam" id="PF00696">
    <property type="entry name" value="AA_kinase"/>
    <property type="match status" value="1"/>
</dbReference>
<dbReference type="PIRSF" id="PIRSF000728">
    <property type="entry name" value="NAGK"/>
    <property type="match status" value="1"/>
</dbReference>
<dbReference type="SUPFAM" id="SSF53633">
    <property type="entry name" value="Carbamate kinase-like"/>
    <property type="match status" value="1"/>
</dbReference>
<reference key="1">
    <citation type="journal article" date="2015" name="Genome Announc.">
        <title>Complete genome sequence of Anaeromyxobacter sp. Fw109-5, an anaerobic, metal-reducing bacterium isolated from a contaminated subsurface environment.</title>
        <authorList>
            <person name="Hwang C."/>
            <person name="Copeland A."/>
            <person name="Lucas S."/>
            <person name="Lapidus A."/>
            <person name="Barry K."/>
            <person name="Glavina Del Rio T."/>
            <person name="Dalin E."/>
            <person name="Tice H."/>
            <person name="Pitluck S."/>
            <person name="Sims D."/>
            <person name="Brettin T."/>
            <person name="Bruce D.C."/>
            <person name="Detter J.C."/>
            <person name="Han C.S."/>
            <person name="Schmutz J."/>
            <person name="Larimer F.W."/>
            <person name="Land M.L."/>
            <person name="Hauser L.J."/>
            <person name="Kyrpides N."/>
            <person name="Lykidis A."/>
            <person name="Richardson P."/>
            <person name="Belieav A."/>
            <person name="Sanford R.A."/>
            <person name="Loeffler F.E."/>
            <person name="Fields M.W."/>
        </authorList>
    </citation>
    <scope>NUCLEOTIDE SEQUENCE [LARGE SCALE GENOMIC DNA]</scope>
    <source>
        <strain>Fw109-5</strain>
    </source>
</reference>